<protein>
    <recommendedName>
        <fullName evidence="1">D-aminoacyl-tRNA deacylase</fullName>
        <shortName evidence="1">DTD</shortName>
        <ecNumber evidence="1">3.1.1.96</ecNumber>
    </recommendedName>
    <alternativeName>
        <fullName evidence="1">Gly-tRNA(Ala) deacylase</fullName>
    </alternativeName>
</protein>
<name>DTD_BURPS</name>
<dbReference type="EC" id="3.1.1.96" evidence="1"/>
<dbReference type="EMBL" id="BX571965">
    <property type="protein sequence ID" value="CAH36913.1"/>
    <property type="status" value="ALT_INIT"/>
    <property type="molecule type" value="Genomic_DNA"/>
</dbReference>
<dbReference type="RefSeq" id="WP_004200499.1">
    <property type="nucleotide sequence ID" value="NZ_CP009538.1"/>
</dbReference>
<dbReference type="RefSeq" id="YP_109497.1">
    <property type="nucleotide sequence ID" value="NC_006350.1"/>
</dbReference>
<dbReference type="SMR" id="Q63QX1"/>
<dbReference type="STRING" id="272560.BPSL2903"/>
<dbReference type="GeneID" id="93061498"/>
<dbReference type="KEGG" id="bps:BPSL2903"/>
<dbReference type="PATRIC" id="fig|272560.51.peg.2386"/>
<dbReference type="eggNOG" id="COG1490">
    <property type="taxonomic scope" value="Bacteria"/>
</dbReference>
<dbReference type="Proteomes" id="UP000000605">
    <property type="component" value="Chromosome 1"/>
</dbReference>
<dbReference type="GO" id="GO:0005737">
    <property type="term" value="C:cytoplasm"/>
    <property type="evidence" value="ECO:0007669"/>
    <property type="project" value="UniProtKB-SubCell"/>
</dbReference>
<dbReference type="GO" id="GO:0051500">
    <property type="term" value="F:D-tyrosyl-tRNA(Tyr) deacylase activity"/>
    <property type="evidence" value="ECO:0007669"/>
    <property type="project" value="TreeGrafter"/>
</dbReference>
<dbReference type="GO" id="GO:0106026">
    <property type="term" value="F:Gly-tRNA(Ala) deacylase activity"/>
    <property type="evidence" value="ECO:0007669"/>
    <property type="project" value="UniProtKB-UniRule"/>
</dbReference>
<dbReference type="GO" id="GO:0043908">
    <property type="term" value="F:Ser(Gly)-tRNA(Ala) hydrolase activity"/>
    <property type="evidence" value="ECO:0007669"/>
    <property type="project" value="UniProtKB-UniRule"/>
</dbReference>
<dbReference type="GO" id="GO:0000049">
    <property type="term" value="F:tRNA binding"/>
    <property type="evidence" value="ECO:0007669"/>
    <property type="project" value="UniProtKB-UniRule"/>
</dbReference>
<dbReference type="GO" id="GO:0019478">
    <property type="term" value="P:D-amino acid catabolic process"/>
    <property type="evidence" value="ECO:0007669"/>
    <property type="project" value="UniProtKB-UniRule"/>
</dbReference>
<dbReference type="CDD" id="cd00563">
    <property type="entry name" value="Dtyr_deacylase"/>
    <property type="match status" value="1"/>
</dbReference>
<dbReference type="FunFam" id="3.50.80.10:FF:000001">
    <property type="entry name" value="D-aminoacyl-tRNA deacylase"/>
    <property type="match status" value="1"/>
</dbReference>
<dbReference type="Gene3D" id="3.50.80.10">
    <property type="entry name" value="D-tyrosyl-tRNA(Tyr) deacylase"/>
    <property type="match status" value="1"/>
</dbReference>
<dbReference type="HAMAP" id="MF_00518">
    <property type="entry name" value="Deacylase_Dtd"/>
    <property type="match status" value="1"/>
</dbReference>
<dbReference type="InterPro" id="IPR003732">
    <property type="entry name" value="Daa-tRNA_deacyls_DTD"/>
</dbReference>
<dbReference type="InterPro" id="IPR023509">
    <property type="entry name" value="DTD-like_sf"/>
</dbReference>
<dbReference type="NCBIfam" id="TIGR00256">
    <property type="entry name" value="D-aminoacyl-tRNA deacylase"/>
    <property type="match status" value="1"/>
</dbReference>
<dbReference type="PANTHER" id="PTHR10472:SF5">
    <property type="entry name" value="D-AMINOACYL-TRNA DEACYLASE 1"/>
    <property type="match status" value="1"/>
</dbReference>
<dbReference type="PANTHER" id="PTHR10472">
    <property type="entry name" value="D-TYROSYL-TRNA TYR DEACYLASE"/>
    <property type="match status" value="1"/>
</dbReference>
<dbReference type="Pfam" id="PF02580">
    <property type="entry name" value="Tyr_Deacylase"/>
    <property type="match status" value="1"/>
</dbReference>
<dbReference type="SUPFAM" id="SSF69500">
    <property type="entry name" value="DTD-like"/>
    <property type="match status" value="1"/>
</dbReference>
<comment type="function">
    <text evidence="1">An aminoacyl-tRNA editing enzyme that deacylates mischarged D-aminoacyl-tRNAs. Also deacylates mischarged glycyl-tRNA(Ala), protecting cells against glycine mischarging by AlaRS. Acts via tRNA-based rather than protein-based catalysis; rejects L-amino acids rather than detecting D-amino acids in the active site. By recycling D-aminoacyl-tRNA to D-amino acids and free tRNA molecules, this enzyme counteracts the toxicity associated with the formation of D-aminoacyl-tRNA entities in vivo and helps enforce protein L-homochirality.</text>
</comment>
<comment type="catalytic activity">
    <reaction evidence="1">
        <text>glycyl-tRNA(Ala) + H2O = tRNA(Ala) + glycine + H(+)</text>
        <dbReference type="Rhea" id="RHEA:53744"/>
        <dbReference type="Rhea" id="RHEA-COMP:9657"/>
        <dbReference type="Rhea" id="RHEA-COMP:13640"/>
        <dbReference type="ChEBI" id="CHEBI:15377"/>
        <dbReference type="ChEBI" id="CHEBI:15378"/>
        <dbReference type="ChEBI" id="CHEBI:57305"/>
        <dbReference type="ChEBI" id="CHEBI:78442"/>
        <dbReference type="ChEBI" id="CHEBI:78522"/>
        <dbReference type="EC" id="3.1.1.96"/>
    </reaction>
</comment>
<comment type="catalytic activity">
    <reaction evidence="1">
        <text>a D-aminoacyl-tRNA + H2O = a tRNA + a D-alpha-amino acid + H(+)</text>
        <dbReference type="Rhea" id="RHEA:13953"/>
        <dbReference type="Rhea" id="RHEA-COMP:10123"/>
        <dbReference type="Rhea" id="RHEA-COMP:10124"/>
        <dbReference type="ChEBI" id="CHEBI:15377"/>
        <dbReference type="ChEBI" id="CHEBI:15378"/>
        <dbReference type="ChEBI" id="CHEBI:59871"/>
        <dbReference type="ChEBI" id="CHEBI:78442"/>
        <dbReference type="ChEBI" id="CHEBI:79333"/>
        <dbReference type="EC" id="3.1.1.96"/>
    </reaction>
</comment>
<comment type="subunit">
    <text evidence="1">Homodimer.</text>
</comment>
<comment type="subcellular location">
    <subcellularLocation>
        <location evidence="1">Cytoplasm</location>
    </subcellularLocation>
</comment>
<comment type="domain">
    <text evidence="1">A Gly-cisPro motif from one monomer fits into the active site of the other monomer to allow specific chiral rejection of L-amino acids.</text>
</comment>
<comment type="similarity">
    <text evidence="1">Belongs to the DTD family.</text>
</comment>
<comment type="sequence caution" evidence="2">
    <conflict type="erroneous initiation">
        <sequence resource="EMBL-CDS" id="CAH36913"/>
    </conflict>
    <text>Extended N-terminus.</text>
</comment>
<accession>Q63QX1</accession>
<gene>
    <name evidence="1" type="primary">dtd</name>
    <name type="ordered locus">BPSL2903</name>
</gene>
<reference key="1">
    <citation type="journal article" date="2004" name="Proc. Natl. Acad. Sci. U.S.A.">
        <title>Genomic plasticity of the causative agent of melioidosis, Burkholderia pseudomallei.</title>
        <authorList>
            <person name="Holden M.T.G."/>
            <person name="Titball R.W."/>
            <person name="Peacock S.J."/>
            <person name="Cerdeno-Tarraga A.-M."/>
            <person name="Atkins T."/>
            <person name="Crossman L.C."/>
            <person name="Pitt T."/>
            <person name="Churcher C."/>
            <person name="Mungall K.L."/>
            <person name="Bentley S.D."/>
            <person name="Sebaihia M."/>
            <person name="Thomson N.R."/>
            <person name="Bason N."/>
            <person name="Beacham I.R."/>
            <person name="Brooks K."/>
            <person name="Brown K.A."/>
            <person name="Brown N.F."/>
            <person name="Challis G.L."/>
            <person name="Cherevach I."/>
            <person name="Chillingworth T."/>
            <person name="Cronin A."/>
            <person name="Crossett B."/>
            <person name="Davis P."/>
            <person name="DeShazer D."/>
            <person name="Feltwell T."/>
            <person name="Fraser A."/>
            <person name="Hance Z."/>
            <person name="Hauser H."/>
            <person name="Holroyd S."/>
            <person name="Jagels K."/>
            <person name="Keith K.E."/>
            <person name="Maddison M."/>
            <person name="Moule S."/>
            <person name="Price C."/>
            <person name="Quail M.A."/>
            <person name="Rabbinowitsch E."/>
            <person name="Rutherford K."/>
            <person name="Sanders M."/>
            <person name="Simmonds M."/>
            <person name="Songsivilai S."/>
            <person name="Stevens K."/>
            <person name="Tumapa S."/>
            <person name="Vesaratchavest M."/>
            <person name="Whitehead S."/>
            <person name="Yeats C."/>
            <person name="Barrell B.G."/>
            <person name="Oyston P.C.F."/>
            <person name="Parkhill J."/>
        </authorList>
    </citation>
    <scope>NUCLEOTIDE SEQUENCE [LARGE SCALE GENOMIC DNA]</scope>
    <source>
        <strain>K96243</strain>
    </source>
</reference>
<sequence length="152" mass="16254">MIALIQRVKRADVRVGERVTGEIGPGLLALVCAERGDTEAAADKLLAKVLGYRVFSDAAGKMNLPVSNLDGAGRAGGLLLVSQFTLAADTNSGLRPSFTPAAPPDEGERLFDYFVRRARERHPIVATGEFGADMQVSLVNDGPVTFWLQTRA</sequence>
<evidence type="ECO:0000255" key="1">
    <source>
        <dbReference type="HAMAP-Rule" id="MF_00518"/>
    </source>
</evidence>
<evidence type="ECO:0000305" key="2"/>
<keyword id="KW-0963">Cytoplasm</keyword>
<keyword id="KW-0378">Hydrolase</keyword>
<keyword id="KW-1185">Reference proteome</keyword>
<keyword id="KW-0694">RNA-binding</keyword>
<keyword id="KW-0820">tRNA-binding</keyword>
<organism>
    <name type="scientific">Burkholderia pseudomallei (strain K96243)</name>
    <dbReference type="NCBI Taxonomy" id="272560"/>
    <lineage>
        <taxon>Bacteria</taxon>
        <taxon>Pseudomonadati</taxon>
        <taxon>Pseudomonadota</taxon>
        <taxon>Betaproteobacteria</taxon>
        <taxon>Burkholderiales</taxon>
        <taxon>Burkholderiaceae</taxon>
        <taxon>Burkholderia</taxon>
        <taxon>pseudomallei group</taxon>
    </lineage>
</organism>
<feature type="chain" id="PRO_0000164527" description="D-aminoacyl-tRNA deacylase">
    <location>
        <begin position="1"/>
        <end position="152"/>
    </location>
</feature>
<feature type="short sequence motif" description="Gly-cisPro motif, important for rejection of L-amino acids" evidence="1">
    <location>
        <begin position="142"/>
        <end position="143"/>
    </location>
</feature>
<proteinExistence type="inferred from homology"/>